<keyword id="KW-0175">Coiled coil</keyword>
<keyword id="KW-0325">Glycoprotein</keyword>
<keyword id="KW-0472">Membrane</keyword>
<keyword id="KW-1185">Reference proteome</keyword>
<keyword id="KW-0812">Transmembrane</keyword>
<keyword id="KW-1133">Transmembrane helix</keyword>
<organismHost>
    <name type="scientific">Acanthamoeba polyphaga</name>
    <name type="common">Amoeba</name>
    <dbReference type="NCBI Taxonomy" id="5757"/>
</organismHost>
<accession>Q5UQW3</accession>
<dbReference type="EMBL" id="AY653733">
    <property type="protein sequence ID" value="AAV50643.1"/>
    <property type="molecule type" value="Genomic_DNA"/>
</dbReference>
<dbReference type="SMR" id="Q5UQW3"/>
<dbReference type="KEGG" id="vg:9924995"/>
<dbReference type="OrthoDB" id="18215at10239"/>
<dbReference type="Proteomes" id="UP000001134">
    <property type="component" value="Genome"/>
</dbReference>
<dbReference type="GO" id="GO:0016020">
    <property type="term" value="C:membrane"/>
    <property type="evidence" value="ECO:0007669"/>
    <property type="project" value="UniProtKB-SubCell"/>
</dbReference>
<dbReference type="GO" id="GO:0000225">
    <property type="term" value="F:N-acetylglucosaminylphosphatidylinositol deacetylase activity"/>
    <property type="evidence" value="ECO:0007669"/>
    <property type="project" value="TreeGrafter"/>
</dbReference>
<dbReference type="Gene3D" id="3.40.50.10320">
    <property type="entry name" value="LmbE-like"/>
    <property type="match status" value="1"/>
</dbReference>
<dbReference type="InterPro" id="IPR003737">
    <property type="entry name" value="GlcNAc_PI_deacetylase-related"/>
</dbReference>
<dbReference type="InterPro" id="IPR024078">
    <property type="entry name" value="LmbE-like_dom_sf"/>
</dbReference>
<dbReference type="PANTHER" id="PTHR12993:SF11">
    <property type="entry name" value="N-ACETYLGLUCOSAMINYL-PHOSPHATIDYLINOSITOL DE-N-ACETYLASE"/>
    <property type="match status" value="1"/>
</dbReference>
<dbReference type="PANTHER" id="PTHR12993">
    <property type="entry name" value="N-ACETYLGLUCOSAMINYL-PHOSPHATIDYLINOSITOL DE-N-ACETYLASE-RELATED"/>
    <property type="match status" value="1"/>
</dbReference>
<dbReference type="Pfam" id="PF02585">
    <property type="entry name" value="PIG-L"/>
    <property type="match status" value="1"/>
</dbReference>
<dbReference type="SUPFAM" id="SSF102588">
    <property type="entry name" value="LmbE-like"/>
    <property type="match status" value="1"/>
</dbReference>
<protein>
    <recommendedName>
        <fullName>Uncharacterized protein L374</fullName>
    </recommendedName>
</protein>
<sequence length="225" mass="26668">MTIFYLVFIAVIIIIILYVLYLRPLYSGTSVIKGNTQYKADKLMIIAHPDDELIFGSKELIENPGWKVICITNGSKKSVNKISICYLMGHRSTYRRDEFINMMNLLHCQYEIWDYEDNYFNSNWNLKQLKNQLENLLREKNYKMVLTHNLAGEYGHTQHKTISKLLYDINPPNLYTFYYDSNTINPYLVLIKKLSHVYQSQDKIIKKNYKYIEHQSKIAVKNNSK</sequence>
<gene>
    <name type="ordered locus">MIMI_L374</name>
</gene>
<feature type="chain" id="PRO_0000253248" description="Uncharacterized protein L374">
    <location>
        <begin position="1"/>
        <end position="225"/>
    </location>
</feature>
<feature type="transmembrane region" description="Helical" evidence="1">
    <location>
        <begin position="2"/>
        <end position="22"/>
    </location>
</feature>
<feature type="coiled-coil region" evidence="1">
    <location>
        <begin position="114"/>
        <end position="146"/>
    </location>
</feature>
<feature type="glycosylation site" description="N-linked (GlcNAc...) asparagine; by host" evidence="1">
    <location>
        <position position="73"/>
    </location>
</feature>
<feature type="glycosylation site" description="N-linked (GlcNAc...) asparagine; by host" evidence="1">
    <location>
        <position position="222"/>
    </location>
</feature>
<comment type="subcellular location">
    <subcellularLocation>
        <location evidence="2">Membrane</location>
        <topology evidence="2">Single-pass membrane protein</topology>
    </subcellularLocation>
</comment>
<organism>
    <name type="scientific">Acanthamoeba polyphaga mimivirus</name>
    <name type="common">APMV</name>
    <dbReference type="NCBI Taxonomy" id="212035"/>
    <lineage>
        <taxon>Viruses</taxon>
        <taxon>Varidnaviria</taxon>
        <taxon>Bamfordvirae</taxon>
        <taxon>Nucleocytoviricota</taxon>
        <taxon>Megaviricetes</taxon>
        <taxon>Imitervirales</taxon>
        <taxon>Mimiviridae</taxon>
        <taxon>Megamimivirinae</taxon>
        <taxon>Mimivirus</taxon>
        <taxon>Mimivirus bradfordmassiliense</taxon>
    </lineage>
</organism>
<proteinExistence type="predicted"/>
<evidence type="ECO:0000255" key="1"/>
<evidence type="ECO:0000305" key="2"/>
<name>YL374_MIMIV</name>
<reference key="1">
    <citation type="journal article" date="2004" name="Science">
        <title>The 1.2-megabase genome sequence of Mimivirus.</title>
        <authorList>
            <person name="Raoult D."/>
            <person name="Audic S."/>
            <person name="Robert C."/>
            <person name="Abergel C."/>
            <person name="Renesto P."/>
            <person name="Ogata H."/>
            <person name="La Scola B."/>
            <person name="Susan M."/>
            <person name="Claverie J.-M."/>
        </authorList>
    </citation>
    <scope>NUCLEOTIDE SEQUENCE [LARGE SCALE GENOMIC DNA]</scope>
    <source>
        <strain>Rowbotham-Bradford</strain>
    </source>
</reference>